<organism>
    <name type="scientific">Azotobacter vinelandii (strain DJ / ATCC BAA-1303)</name>
    <dbReference type="NCBI Taxonomy" id="322710"/>
    <lineage>
        <taxon>Bacteria</taxon>
        <taxon>Pseudomonadati</taxon>
        <taxon>Pseudomonadota</taxon>
        <taxon>Gammaproteobacteria</taxon>
        <taxon>Pseudomonadales</taxon>
        <taxon>Pseudomonadaceae</taxon>
        <taxon>Azotobacter</taxon>
    </lineage>
</organism>
<protein>
    <recommendedName>
        <fullName evidence="1">UDP-2,3-diacylglucosamine hydrolase</fullName>
        <ecNumber evidence="1">3.6.1.54</ecNumber>
    </recommendedName>
    <alternativeName>
        <fullName evidence="1">UDP-2,3-diacylglucosamine diphosphatase</fullName>
    </alternativeName>
</protein>
<name>LPXH_AZOVD</name>
<comment type="function">
    <text evidence="1">Hydrolyzes the pyrophosphate bond of UDP-2,3-diacylglucosamine to yield 2,3-diacylglucosamine 1-phosphate (lipid X) and UMP by catalyzing the attack of water at the alpha-P atom. Involved in the biosynthesis of lipid A, a phosphorylated glycolipid that anchors the lipopolysaccharide to the outer membrane of the cell.</text>
</comment>
<comment type="catalytic activity">
    <reaction evidence="1">
        <text>UDP-2-N,3-O-bis[(3R)-3-hydroxytetradecanoyl]-alpha-D-glucosamine + H2O = 2-N,3-O-bis[(3R)-3-hydroxytetradecanoyl]-alpha-D-glucosaminyl 1-phosphate + UMP + 2 H(+)</text>
        <dbReference type="Rhea" id="RHEA:25213"/>
        <dbReference type="ChEBI" id="CHEBI:15377"/>
        <dbReference type="ChEBI" id="CHEBI:15378"/>
        <dbReference type="ChEBI" id="CHEBI:57865"/>
        <dbReference type="ChEBI" id="CHEBI:57957"/>
        <dbReference type="ChEBI" id="CHEBI:78847"/>
        <dbReference type="EC" id="3.6.1.54"/>
    </reaction>
</comment>
<comment type="cofactor">
    <cofactor evidence="1">
        <name>Mn(2+)</name>
        <dbReference type="ChEBI" id="CHEBI:29035"/>
    </cofactor>
    <text evidence="1">Binds 2 Mn(2+) ions per subunit in a binuclear metal center.</text>
</comment>
<comment type="pathway">
    <text evidence="1">Glycolipid biosynthesis; lipid IV(A) biosynthesis; lipid IV(A) from (3R)-3-hydroxytetradecanoyl-[acyl-carrier-protein] and UDP-N-acetyl-alpha-D-glucosamine: step 4/6.</text>
</comment>
<comment type="subcellular location">
    <subcellularLocation>
        <location evidence="1">Cell inner membrane</location>
        <topology evidence="1">Peripheral membrane protein</topology>
        <orientation evidence="1">Cytoplasmic side</orientation>
    </subcellularLocation>
</comment>
<comment type="similarity">
    <text evidence="1">Belongs to the LpxH family.</text>
</comment>
<proteinExistence type="inferred from homology"/>
<evidence type="ECO:0000255" key="1">
    <source>
        <dbReference type="HAMAP-Rule" id="MF_00575"/>
    </source>
</evidence>
<reference key="1">
    <citation type="journal article" date="2009" name="J. Bacteriol.">
        <title>Genome sequence of Azotobacter vinelandii, an obligate aerobe specialized to support diverse anaerobic metabolic processes.</title>
        <authorList>
            <person name="Setubal J.C."/>
            <person name="Dos Santos P."/>
            <person name="Goldman B.S."/>
            <person name="Ertesvaag H."/>
            <person name="Espin G."/>
            <person name="Rubio L.M."/>
            <person name="Valla S."/>
            <person name="Almeida N.F."/>
            <person name="Balasubramanian D."/>
            <person name="Cromes L."/>
            <person name="Curatti L."/>
            <person name="Du Z."/>
            <person name="Godsy E."/>
            <person name="Goodner B."/>
            <person name="Hellner-Burris K."/>
            <person name="Hernandez J.A."/>
            <person name="Houmiel K."/>
            <person name="Imperial J."/>
            <person name="Kennedy C."/>
            <person name="Larson T.J."/>
            <person name="Latreille P."/>
            <person name="Ligon L.S."/>
            <person name="Lu J."/>
            <person name="Maerk M."/>
            <person name="Miller N.M."/>
            <person name="Norton S."/>
            <person name="O'Carroll I.P."/>
            <person name="Paulsen I."/>
            <person name="Raulfs E.C."/>
            <person name="Roemer R."/>
            <person name="Rosser J."/>
            <person name="Segura D."/>
            <person name="Slater S."/>
            <person name="Stricklin S.L."/>
            <person name="Studholme D.J."/>
            <person name="Sun J."/>
            <person name="Viana C.J."/>
            <person name="Wallin E."/>
            <person name="Wang B."/>
            <person name="Wheeler C."/>
            <person name="Zhu H."/>
            <person name="Dean D.R."/>
            <person name="Dixon R."/>
            <person name="Wood D."/>
        </authorList>
    </citation>
    <scope>NUCLEOTIDE SEQUENCE [LARGE SCALE GENOMIC DNA]</scope>
    <source>
        <strain>DJ / ATCC BAA-1303</strain>
    </source>
</reference>
<keyword id="KW-0997">Cell inner membrane</keyword>
<keyword id="KW-1003">Cell membrane</keyword>
<keyword id="KW-0378">Hydrolase</keyword>
<keyword id="KW-0441">Lipid A biosynthesis</keyword>
<keyword id="KW-0444">Lipid biosynthesis</keyword>
<keyword id="KW-0443">Lipid metabolism</keyword>
<keyword id="KW-0464">Manganese</keyword>
<keyword id="KW-0472">Membrane</keyword>
<keyword id="KW-0479">Metal-binding</keyword>
<gene>
    <name evidence="1" type="primary">lpxH</name>
    <name type="ordered locus">Avin_23500</name>
</gene>
<dbReference type="EC" id="3.6.1.54" evidence="1"/>
<dbReference type="EMBL" id="CP001157">
    <property type="protein sequence ID" value="ACO78538.1"/>
    <property type="molecule type" value="Genomic_DNA"/>
</dbReference>
<dbReference type="RefSeq" id="WP_012700936.1">
    <property type="nucleotide sequence ID" value="NC_012560.1"/>
</dbReference>
<dbReference type="SMR" id="C1DHE3"/>
<dbReference type="STRING" id="322710.Avin_23500"/>
<dbReference type="EnsemblBacteria" id="ACO78538">
    <property type="protein sequence ID" value="ACO78538"/>
    <property type="gene ID" value="Avin_23500"/>
</dbReference>
<dbReference type="GeneID" id="88185534"/>
<dbReference type="KEGG" id="avn:Avin_23500"/>
<dbReference type="eggNOG" id="COG2908">
    <property type="taxonomic scope" value="Bacteria"/>
</dbReference>
<dbReference type="HOGENOM" id="CLU_074586_0_0_6"/>
<dbReference type="OrthoDB" id="9783283at2"/>
<dbReference type="BRENDA" id="3.6.1.54">
    <property type="organism ID" value="49"/>
</dbReference>
<dbReference type="UniPathway" id="UPA00359">
    <property type="reaction ID" value="UER00480"/>
</dbReference>
<dbReference type="Proteomes" id="UP000002424">
    <property type="component" value="Chromosome"/>
</dbReference>
<dbReference type="GO" id="GO:0005737">
    <property type="term" value="C:cytoplasm"/>
    <property type="evidence" value="ECO:0007669"/>
    <property type="project" value="InterPro"/>
</dbReference>
<dbReference type="GO" id="GO:0019897">
    <property type="term" value="C:extrinsic component of plasma membrane"/>
    <property type="evidence" value="ECO:0007669"/>
    <property type="project" value="UniProtKB-UniRule"/>
</dbReference>
<dbReference type="GO" id="GO:0030145">
    <property type="term" value="F:manganese ion binding"/>
    <property type="evidence" value="ECO:0007669"/>
    <property type="project" value="UniProtKB-UniRule"/>
</dbReference>
<dbReference type="GO" id="GO:0008758">
    <property type="term" value="F:UDP-2,3-diacylglucosamine hydrolase activity"/>
    <property type="evidence" value="ECO:0007669"/>
    <property type="project" value="UniProtKB-UniRule"/>
</dbReference>
<dbReference type="GO" id="GO:0009245">
    <property type="term" value="P:lipid A biosynthetic process"/>
    <property type="evidence" value="ECO:0007669"/>
    <property type="project" value="UniProtKB-UniRule"/>
</dbReference>
<dbReference type="CDD" id="cd07398">
    <property type="entry name" value="MPP_YbbF-LpxH"/>
    <property type="match status" value="1"/>
</dbReference>
<dbReference type="Gene3D" id="3.60.21.10">
    <property type="match status" value="1"/>
</dbReference>
<dbReference type="HAMAP" id="MF_00575">
    <property type="entry name" value="LpxH"/>
    <property type="match status" value="1"/>
</dbReference>
<dbReference type="InterPro" id="IPR004843">
    <property type="entry name" value="Calcineurin-like_PHP_ApaH"/>
</dbReference>
<dbReference type="InterPro" id="IPR043461">
    <property type="entry name" value="LpxH-like"/>
</dbReference>
<dbReference type="InterPro" id="IPR029052">
    <property type="entry name" value="Metallo-depent_PP-like"/>
</dbReference>
<dbReference type="InterPro" id="IPR010138">
    <property type="entry name" value="UDP-diacylglucosamine_Hdrlase"/>
</dbReference>
<dbReference type="NCBIfam" id="TIGR01854">
    <property type="entry name" value="lipid_A_lpxH"/>
    <property type="match status" value="1"/>
</dbReference>
<dbReference type="NCBIfam" id="NF003743">
    <property type="entry name" value="PRK05340.1"/>
    <property type="match status" value="1"/>
</dbReference>
<dbReference type="PANTHER" id="PTHR34990:SF1">
    <property type="entry name" value="UDP-2,3-DIACYLGLUCOSAMINE HYDROLASE"/>
    <property type="match status" value="1"/>
</dbReference>
<dbReference type="PANTHER" id="PTHR34990">
    <property type="entry name" value="UDP-2,3-DIACYLGLUCOSAMINE HYDROLASE-RELATED"/>
    <property type="match status" value="1"/>
</dbReference>
<dbReference type="Pfam" id="PF00149">
    <property type="entry name" value="Metallophos"/>
    <property type="match status" value="1"/>
</dbReference>
<dbReference type="SUPFAM" id="SSF56300">
    <property type="entry name" value="Metallo-dependent phosphatases"/>
    <property type="match status" value="1"/>
</dbReference>
<accession>C1DHE3</accession>
<feature type="chain" id="PRO_1000212091" description="UDP-2,3-diacylglucosamine hydrolase">
    <location>
        <begin position="1"/>
        <end position="241"/>
    </location>
</feature>
<feature type="binding site" evidence="1">
    <location>
        <position position="8"/>
    </location>
    <ligand>
        <name>Mn(2+)</name>
        <dbReference type="ChEBI" id="CHEBI:29035"/>
        <label>1</label>
    </ligand>
</feature>
<feature type="binding site" evidence="1">
    <location>
        <position position="10"/>
    </location>
    <ligand>
        <name>Mn(2+)</name>
        <dbReference type="ChEBI" id="CHEBI:29035"/>
        <label>1</label>
    </ligand>
</feature>
<feature type="binding site" evidence="1">
    <location>
        <position position="41"/>
    </location>
    <ligand>
        <name>Mn(2+)</name>
        <dbReference type="ChEBI" id="CHEBI:29035"/>
        <label>1</label>
    </ligand>
</feature>
<feature type="binding site" evidence="1">
    <location>
        <position position="41"/>
    </location>
    <ligand>
        <name>Mn(2+)</name>
        <dbReference type="ChEBI" id="CHEBI:29035"/>
        <label>2</label>
    </ligand>
</feature>
<feature type="binding site" evidence="1">
    <location>
        <begin position="79"/>
        <end position="80"/>
    </location>
    <ligand>
        <name>substrate</name>
    </ligand>
</feature>
<feature type="binding site" evidence="1">
    <location>
        <position position="79"/>
    </location>
    <ligand>
        <name>Mn(2+)</name>
        <dbReference type="ChEBI" id="CHEBI:29035"/>
        <label>2</label>
    </ligand>
</feature>
<feature type="binding site" evidence="1">
    <location>
        <position position="114"/>
    </location>
    <ligand>
        <name>Mn(2+)</name>
        <dbReference type="ChEBI" id="CHEBI:29035"/>
        <label>2</label>
    </ligand>
</feature>
<feature type="binding site" evidence="1">
    <location>
        <position position="122"/>
    </location>
    <ligand>
        <name>substrate</name>
    </ligand>
</feature>
<feature type="binding site" evidence="1">
    <location>
        <position position="160"/>
    </location>
    <ligand>
        <name>substrate</name>
    </ligand>
</feature>
<feature type="binding site" evidence="1">
    <location>
        <position position="167"/>
    </location>
    <ligand>
        <name>substrate</name>
    </ligand>
</feature>
<feature type="binding site" evidence="1">
    <location>
        <position position="195"/>
    </location>
    <ligand>
        <name>Mn(2+)</name>
        <dbReference type="ChEBI" id="CHEBI:29035"/>
        <label>2</label>
    </ligand>
</feature>
<feature type="binding site" evidence="1">
    <location>
        <position position="195"/>
    </location>
    <ligand>
        <name>substrate</name>
    </ligand>
</feature>
<feature type="binding site" evidence="1">
    <location>
        <position position="197"/>
    </location>
    <ligand>
        <name>Mn(2+)</name>
        <dbReference type="ChEBI" id="CHEBI:29035"/>
        <label>1</label>
    </ligand>
</feature>
<sequence length="241" mass="27785">MTTLLISDLHLDEERPDIARAFLRFLKERASQAEALYILGDFFEAWIGDDAMTSFQRDIAAALREVAERGTRVFLMHGNRDFLVGHSFCRQAGCTLLRDPSRVILNGAPVLLMHGDTLCTRDIAYMRFRRRLRNPVSVWLLRHLPLSKRRQLARKWRDASRMQVRRKATEIVDVTPEEVPRIMAAHGVLTLIHGHTHRPAVHELQVDGRQARRIVLGDWNRQGWVLQVDGSGYHLTPFPID</sequence>